<reference key="1">
    <citation type="journal article" date="2011" name="J. Bacteriol.">
        <title>Comparative genomics of 28 Salmonella enterica isolates: evidence for CRISPR-mediated adaptive sublineage evolution.</title>
        <authorList>
            <person name="Fricke W.F."/>
            <person name="Mammel M.K."/>
            <person name="McDermott P.F."/>
            <person name="Tartera C."/>
            <person name="White D.G."/>
            <person name="Leclerc J.E."/>
            <person name="Ravel J."/>
            <person name="Cebula T.A."/>
        </authorList>
    </citation>
    <scope>NUCLEOTIDE SEQUENCE [LARGE SCALE GENOMIC DNA]</scope>
    <source>
        <strain>SL254</strain>
    </source>
</reference>
<name>ASSY_SALNS</name>
<accession>B4T702</accession>
<feature type="chain" id="PRO_1000129767" description="Argininosuccinate synthase">
    <location>
        <begin position="1"/>
        <end position="447"/>
    </location>
</feature>
<feature type="binding site" evidence="1">
    <location>
        <begin position="17"/>
        <end position="25"/>
    </location>
    <ligand>
        <name>ATP</name>
        <dbReference type="ChEBI" id="CHEBI:30616"/>
    </ligand>
</feature>
<feature type="binding site" evidence="1">
    <location>
        <position position="43"/>
    </location>
    <ligand>
        <name>ATP</name>
        <dbReference type="ChEBI" id="CHEBI:30616"/>
    </ligand>
</feature>
<feature type="binding site" evidence="1">
    <location>
        <position position="99"/>
    </location>
    <ligand>
        <name>L-citrulline</name>
        <dbReference type="ChEBI" id="CHEBI:57743"/>
    </ligand>
</feature>
<feature type="binding site" evidence="1">
    <location>
        <position position="129"/>
    </location>
    <ligand>
        <name>ATP</name>
        <dbReference type="ChEBI" id="CHEBI:30616"/>
    </ligand>
</feature>
<feature type="binding site" evidence="1">
    <location>
        <position position="131"/>
    </location>
    <ligand>
        <name>ATP</name>
        <dbReference type="ChEBI" id="CHEBI:30616"/>
    </ligand>
</feature>
<feature type="binding site" evidence="1">
    <location>
        <position position="131"/>
    </location>
    <ligand>
        <name>L-aspartate</name>
        <dbReference type="ChEBI" id="CHEBI:29991"/>
    </ligand>
</feature>
<feature type="binding site" evidence="1">
    <location>
        <position position="135"/>
    </location>
    <ligand>
        <name>L-aspartate</name>
        <dbReference type="ChEBI" id="CHEBI:29991"/>
    </ligand>
</feature>
<feature type="binding site" evidence="1">
    <location>
        <position position="135"/>
    </location>
    <ligand>
        <name>L-citrulline</name>
        <dbReference type="ChEBI" id="CHEBI:57743"/>
    </ligand>
</feature>
<feature type="binding site" evidence="1">
    <location>
        <position position="136"/>
    </location>
    <ligand>
        <name>ATP</name>
        <dbReference type="ChEBI" id="CHEBI:30616"/>
    </ligand>
</feature>
<feature type="binding site" evidence="1">
    <location>
        <position position="136"/>
    </location>
    <ligand>
        <name>L-aspartate</name>
        <dbReference type="ChEBI" id="CHEBI:29991"/>
    </ligand>
</feature>
<feature type="binding site" evidence="1">
    <location>
        <position position="139"/>
    </location>
    <ligand>
        <name>L-citrulline</name>
        <dbReference type="ChEBI" id="CHEBI:57743"/>
    </ligand>
</feature>
<feature type="binding site" evidence="1">
    <location>
        <position position="192"/>
    </location>
    <ligand>
        <name>L-citrulline</name>
        <dbReference type="ChEBI" id="CHEBI:57743"/>
    </ligand>
</feature>
<feature type="binding site" evidence="1">
    <location>
        <position position="194"/>
    </location>
    <ligand>
        <name>ATP</name>
        <dbReference type="ChEBI" id="CHEBI:30616"/>
    </ligand>
</feature>
<feature type="binding site" evidence="1">
    <location>
        <position position="201"/>
    </location>
    <ligand>
        <name>L-citrulline</name>
        <dbReference type="ChEBI" id="CHEBI:57743"/>
    </ligand>
</feature>
<feature type="binding site" evidence="1">
    <location>
        <position position="203"/>
    </location>
    <ligand>
        <name>L-citrulline</name>
        <dbReference type="ChEBI" id="CHEBI:57743"/>
    </ligand>
</feature>
<feature type="binding site" evidence="1">
    <location>
        <position position="280"/>
    </location>
    <ligand>
        <name>L-citrulline</name>
        <dbReference type="ChEBI" id="CHEBI:57743"/>
    </ligand>
</feature>
<evidence type="ECO:0000255" key="1">
    <source>
        <dbReference type="HAMAP-Rule" id="MF_00581"/>
    </source>
</evidence>
<dbReference type="EC" id="6.3.4.5" evidence="1"/>
<dbReference type="EMBL" id="CP001113">
    <property type="protein sequence ID" value="ACF61527.1"/>
    <property type="molecule type" value="Genomic_DNA"/>
</dbReference>
<dbReference type="RefSeq" id="WP_000207649.1">
    <property type="nucleotide sequence ID" value="NZ_CCMR01000001.1"/>
</dbReference>
<dbReference type="SMR" id="B4T702"/>
<dbReference type="KEGG" id="see:SNSL254_A3549"/>
<dbReference type="HOGENOM" id="CLU_032784_4_1_6"/>
<dbReference type="UniPathway" id="UPA00068">
    <property type="reaction ID" value="UER00113"/>
</dbReference>
<dbReference type="Proteomes" id="UP000008824">
    <property type="component" value="Chromosome"/>
</dbReference>
<dbReference type="GO" id="GO:0005737">
    <property type="term" value="C:cytoplasm"/>
    <property type="evidence" value="ECO:0007669"/>
    <property type="project" value="UniProtKB-SubCell"/>
</dbReference>
<dbReference type="GO" id="GO:0004055">
    <property type="term" value="F:argininosuccinate synthase activity"/>
    <property type="evidence" value="ECO:0007669"/>
    <property type="project" value="UniProtKB-UniRule"/>
</dbReference>
<dbReference type="GO" id="GO:0005524">
    <property type="term" value="F:ATP binding"/>
    <property type="evidence" value="ECO:0007669"/>
    <property type="project" value="UniProtKB-UniRule"/>
</dbReference>
<dbReference type="GO" id="GO:0042803">
    <property type="term" value="F:protein homodimerization activity"/>
    <property type="evidence" value="ECO:0007669"/>
    <property type="project" value="InterPro"/>
</dbReference>
<dbReference type="GO" id="GO:0000053">
    <property type="term" value="P:argininosuccinate metabolic process"/>
    <property type="evidence" value="ECO:0007669"/>
    <property type="project" value="TreeGrafter"/>
</dbReference>
<dbReference type="GO" id="GO:0006526">
    <property type="term" value="P:L-arginine biosynthetic process"/>
    <property type="evidence" value="ECO:0007669"/>
    <property type="project" value="UniProtKB-UniRule"/>
</dbReference>
<dbReference type="GO" id="GO:0000050">
    <property type="term" value="P:urea cycle"/>
    <property type="evidence" value="ECO:0007669"/>
    <property type="project" value="TreeGrafter"/>
</dbReference>
<dbReference type="CDD" id="cd01999">
    <property type="entry name" value="ASS"/>
    <property type="match status" value="1"/>
</dbReference>
<dbReference type="FunFam" id="1.10.287.400:FF:000001">
    <property type="entry name" value="Argininosuccinate synthase"/>
    <property type="match status" value="1"/>
</dbReference>
<dbReference type="Gene3D" id="1.10.287.400">
    <property type="match status" value="1"/>
</dbReference>
<dbReference type="Gene3D" id="3.90.1260.10">
    <property type="entry name" value="Argininosuccinate synthetase, chain A, domain 2"/>
    <property type="match status" value="1"/>
</dbReference>
<dbReference type="Gene3D" id="3.40.50.620">
    <property type="entry name" value="HUPs"/>
    <property type="match status" value="1"/>
</dbReference>
<dbReference type="HAMAP" id="MF_00581">
    <property type="entry name" value="Arg_succ_synth_type2"/>
    <property type="match status" value="1"/>
</dbReference>
<dbReference type="InterPro" id="IPR023437">
    <property type="entry name" value="Arg_succ_synth_type2_subfam"/>
</dbReference>
<dbReference type="InterPro" id="IPR048268">
    <property type="entry name" value="Arginosuc_syn_C"/>
</dbReference>
<dbReference type="InterPro" id="IPR048267">
    <property type="entry name" value="Arginosuc_syn_N"/>
</dbReference>
<dbReference type="InterPro" id="IPR001518">
    <property type="entry name" value="Arginosuc_synth"/>
</dbReference>
<dbReference type="InterPro" id="IPR018223">
    <property type="entry name" value="Arginosuc_synth_CS"/>
</dbReference>
<dbReference type="InterPro" id="IPR023434">
    <property type="entry name" value="Arginosuc_synth_type_1_subfam"/>
</dbReference>
<dbReference type="InterPro" id="IPR024074">
    <property type="entry name" value="AS_cat/multimer_dom_body"/>
</dbReference>
<dbReference type="InterPro" id="IPR024073">
    <property type="entry name" value="AS_multimer_C_tail"/>
</dbReference>
<dbReference type="InterPro" id="IPR014729">
    <property type="entry name" value="Rossmann-like_a/b/a_fold"/>
</dbReference>
<dbReference type="NCBIfam" id="TIGR00032">
    <property type="entry name" value="argG"/>
    <property type="match status" value="1"/>
</dbReference>
<dbReference type="NCBIfam" id="NF003779">
    <property type="entry name" value="PRK05370.1"/>
    <property type="match status" value="1"/>
</dbReference>
<dbReference type="PANTHER" id="PTHR11587">
    <property type="entry name" value="ARGININOSUCCINATE SYNTHASE"/>
    <property type="match status" value="1"/>
</dbReference>
<dbReference type="PANTHER" id="PTHR11587:SF2">
    <property type="entry name" value="ARGININOSUCCINATE SYNTHASE"/>
    <property type="match status" value="1"/>
</dbReference>
<dbReference type="Pfam" id="PF20979">
    <property type="entry name" value="Arginosuc_syn_C"/>
    <property type="match status" value="1"/>
</dbReference>
<dbReference type="Pfam" id="PF00764">
    <property type="entry name" value="Arginosuc_synth"/>
    <property type="match status" value="1"/>
</dbReference>
<dbReference type="SUPFAM" id="SSF52402">
    <property type="entry name" value="Adenine nucleotide alpha hydrolases-like"/>
    <property type="match status" value="1"/>
</dbReference>
<dbReference type="SUPFAM" id="SSF69864">
    <property type="entry name" value="Argininosuccinate synthetase, C-terminal domain"/>
    <property type="match status" value="1"/>
</dbReference>
<dbReference type="PROSITE" id="PS00564">
    <property type="entry name" value="ARGININOSUCCIN_SYN_1"/>
    <property type="match status" value="1"/>
</dbReference>
<dbReference type="PROSITE" id="PS00565">
    <property type="entry name" value="ARGININOSUCCIN_SYN_2"/>
    <property type="match status" value="1"/>
</dbReference>
<proteinExistence type="inferred from homology"/>
<comment type="catalytic activity">
    <reaction evidence="1">
        <text>L-citrulline + L-aspartate + ATP = 2-(N(omega)-L-arginino)succinate + AMP + diphosphate + H(+)</text>
        <dbReference type="Rhea" id="RHEA:10932"/>
        <dbReference type="ChEBI" id="CHEBI:15378"/>
        <dbReference type="ChEBI" id="CHEBI:29991"/>
        <dbReference type="ChEBI" id="CHEBI:30616"/>
        <dbReference type="ChEBI" id="CHEBI:33019"/>
        <dbReference type="ChEBI" id="CHEBI:57472"/>
        <dbReference type="ChEBI" id="CHEBI:57743"/>
        <dbReference type="ChEBI" id="CHEBI:456215"/>
        <dbReference type="EC" id="6.3.4.5"/>
    </reaction>
</comment>
<comment type="pathway">
    <text evidence="1">Amino-acid biosynthesis; L-arginine biosynthesis; L-arginine from L-ornithine and carbamoyl phosphate: step 2/3.</text>
</comment>
<comment type="subunit">
    <text evidence="1">Homotetramer.</text>
</comment>
<comment type="subcellular location">
    <subcellularLocation>
        <location evidence="1">Cytoplasm</location>
    </subcellularLocation>
</comment>
<comment type="similarity">
    <text evidence="1">Belongs to the argininosuccinate synthase family. Type 2 subfamily.</text>
</comment>
<sequence>MTTILKHLPAGQRIGIAFSGGLDTSAALLWMRQKGAVPYAYTANLGQPDEDDYDAIPRRAMEYGAENARLIDCRKQLVAEGIAAIQCGAFHNTTGGLTYFNTTPLGRAVTGTMLVAAMKEDGVNIWGDGSTYKGNDIERFYRYGLLTNAELQIYKPWLDTDFIDELGGRHEMSEFMIACGFDYKMSVEKAYSTDSNMLGATHEAKDLEFLNSSVKIVNPIMGVKFWDESVKIPAEEVTVRFEQGHPVALNGKTFSDDVEMMLEANRIGGRHGLGMSDQIENRIIEAKSRGIYEAPGMALLHIAYERLLTGIHNEDTIEQYHSHGRQLGKLLYQGRWFDSQALMLRDGLQRWVASQITGEVTLELRRGNDYSILNTVSDNLTYKPERLTMEKGESVFSPDDRIGQLTMRNLDITDTREKLFGYAKAGLLTASSATGLPQVENLENKGK</sequence>
<gene>
    <name evidence="1" type="primary">argG</name>
    <name type="ordered locus">SNSL254_A3549</name>
</gene>
<organism>
    <name type="scientific">Salmonella newport (strain SL254)</name>
    <dbReference type="NCBI Taxonomy" id="423368"/>
    <lineage>
        <taxon>Bacteria</taxon>
        <taxon>Pseudomonadati</taxon>
        <taxon>Pseudomonadota</taxon>
        <taxon>Gammaproteobacteria</taxon>
        <taxon>Enterobacterales</taxon>
        <taxon>Enterobacteriaceae</taxon>
        <taxon>Salmonella</taxon>
    </lineage>
</organism>
<keyword id="KW-0028">Amino-acid biosynthesis</keyword>
<keyword id="KW-0055">Arginine biosynthesis</keyword>
<keyword id="KW-0067">ATP-binding</keyword>
<keyword id="KW-0963">Cytoplasm</keyword>
<keyword id="KW-0436">Ligase</keyword>
<keyword id="KW-0547">Nucleotide-binding</keyword>
<protein>
    <recommendedName>
        <fullName evidence="1">Argininosuccinate synthase</fullName>
        <ecNumber evidence="1">6.3.4.5</ecNumber>
    </recommendedName>
    <alternativeName>
        <fullName evidence="1">Citrulline--aspartate ligase</fullName>
    </alternativeName>
</protein>